<feature type="chain" id="PRO_0000286105" description="Protein PAXX">
    <location>
        <begin position="1"/>
        <end position="205"/>
    </location>
</feature>
<feature type="domain" description="PISA" evidence="13">
    <location>
        <begin position="39"/>
        <end position="81"/>
    </location>
</feature>
<feature type="region of interest" description="Disordered" evidence="2">
    <location>
        <begin position="147"/>
        <end position="205"/>
    </location>
</feature>
<feature type="region of interest" description="Mediates interaction with XRCC5/Ku80 and XRCC6/Ku70 and association with the non-homologous end joining core complex" evidence="1">
    <location>
        <begin position="172"/>
        <end position="205"/>
    </location>
</feature>
<feature type="short sequence motif" description="XLM" evidence="1">
    <location>
        <begin position="191"/>
        <end position="205"/>
    </location>
</feature>
<feature type="compositionally biased region" description="Polar residues" evidence="2">
    <location>
        <begin position="147"/>
        <end position="159"/>
    </location>
</feature>
<feature type="modified residue" description="Phosphothreonine" evidence="1">
    <location>
        <position position="147"/>
    </location>
</feature>
<feature type="modified residue" description="Phosphoserine" evidence="1">
    <location>
        <position position="150"/>
    </location>
</feature>
<dbReference type="EMBL" id="AL732557">
    <property type="status" value="NOT_ANNOTATED_CDS"/>
    <property type="molecule type" value="Genomic_DNA"/>
</dbReference>
<dbReference type="EMBL" id="BC029214">
    <property type="protein sequence ID" value="AAH29214.1"/>
    <property type="molecule type" value="mRNA"/>
</dbReference>
<dbReference type="EMBL" id="AK053101">
    <property type="protein sequence ID" value="BAC35265.1"/>
    <property type="molecule type" value="mRNA"/>
</dbReference>
<dbReference type="CCDS" id="CCDS15775.1"/>
<dbReference type="RefSeq" id="NP_705785.1">
    <property type="nucleotide sequence ID" value="NM_153557.2"/>
</dbReference>
<dbReference type="SMR" id="Q8K0Y7"/>
<dbReference type="FunCoup" id="Q8K0Y7">
    <property type="interactions" value="609"/>
</dbReference>
<dbReference type="STRING" id="10090.ENSMUSP00000109899"/>
<dbReference type="GlyGen" id="Q8K0Y7">
    <property type="glycosylation" value="1 site"/>
</dbReference>
<dbReference type="iPTMnet" id="Q8K0Y7"/>
<dbReference type="PhosphoSitePlus" id="Q8K0Y7"/>
<dbReference type="PaxDb" id="10090-ENSMUSP00000109899"/>
<dbReference type="ProteomicsDB" id="294164"/>
<dbReference type="Pumba" id="Q8K0Y7"/>
<dbReference type="Antibodypedia" id="51856">
    <property type="antibodies" value="51 antibodies from 12 providers"/>
</dbReference>
<dbReference type="DNASU" id="227622"/>
<dbReference type="Ensembl" id="ENSMUST00000114261.9">
    <property type="protein sequence ID" value="ENSMUSP00000109899.3"/>
    <property type="gene ID" value="ENSMUSG00000047617.12"/>
</dbReference>
<dbReference type="GeneID" id="227622"/>
<dbReference type="KEGG" id="mmu:227622"/>
<dbReference type="UCSC" id="uc008ise.1">
    <property type="organism name" value="mouse"/>
</dbReference>
<dbReference type="AGR" id="MGI:2442831"/>
<dbReference type="CTD" id="286257"/>
<dbReference type="MGI" id="MGI:2442831">
    <property type="gene designation" value="Paxx"/>
</dbReference>
<dbReference type="VEuPathDB" id="HostDB:ENSMUSG00000047617"/>
<dbReference type="eggNOG" id="ENOG502S6IF">
    <property type="taxonomic scope" value="Eukaryota"/>
</dbReference>
<dbReference type="GeneTree" id="ENSGT00390000000543"/>
<dbReference type="HOGENOM" id="CLU_121226_0_0_1"/>
<dbReference type="InParanoid" id="Q8K0Y7"/>
<dbReference type="OMA" id="ANVWSVE"/>
<dbReference type="PhylomeDB" id="Q8K0Y7"/>
<dbReference type="TreeFam" id="TF337247"/>
<dbReference type="BioGRID-ORCS" id="227622">
    <property type="hits" value="3 hits in 113 CRISPR screens"/>
</dbReference>
<dbReference type="ChiTaRS" id="BC029214">
    <property type="organism name" value="mouse"/>
</dbReference>
<dbReference type="PRO" id="PR:Q8K0Y7"/>
<dbReference type="Proteomes" id="UP000000589">
    <property type="component" value="Chromosome 2"/>
</dbReference>
<dbReference type="RNAct" id="Q8K0Y7">
    <property type="molecule type" value="protein"/>
</dbReference>
<dbReference type="Bgee" id="ENSMUSG00000047617">
    <property type="expression patterns" value="Expressed in granulocyte and 207 other cell types or tissues"/>
</dbReference>
<dbReference type="ExpressionAtlas" id="Q8K0Y7">
    <property type="expression patterns" value="baseline and differential"/>
</dbReference>
<dbReference type="GO" id="GO:0043564">
    <property type="term" value="C:Ku70:Ku80 complex"/>
    <property type="evidence" value="ECO:0007669"/>
    <property type="project" value="Ensembl"/>
</dbReference>
<dbReference type="GO" id="GO:0070419">
    <property type="term" value="C:nonhomologous end joining complex"/>
    <property type="evidence" value="ECO:0000250"/>
    <property type="project" value="UniProtKB"/>
</dbReference>
<dbReference type="GO" id="GO:0005654">
    <property type="term" value="C:nucleoplasm"/>
    <property type="evidence" value="ECO:0007669"/>
    <property type="project" value="Ensembl"/>
</dbReference>
<dbReference type="GO" id="GO:0005634">
    <property type="term" value="C:nucleus"/>
    <property type="evidence" value="ECO:0000250"/>
    <property type="project" value="UniProtKB"/>
</dbReference>
<dbReference type="GO" id="GO:0035861">
    <property type="term" value="C:site of double-strand break"/>
    <property type="evidence" value="ECO:0000250"/>
    <property type="project" value="UniProtKB"/>
</dbReference>
<dbReference type="GO" id="GO:0070182">
    <property type="term" value="F:DNA polymerase binding"/>
    <property type="evidence" value="ECO:0007669"/>
    <property type="project" value="Ensembl"/>
</dbReference>
<dbReference type="GO" id="GO:0060090">
    <property type="term" value="F:molecular adaptor activity"/>
    <property type="evidence" value="ECO:0000250"/>
    <property type="project" value="UniProtKB"/>
</dbReference>
<dbReference type="GO" id="GO:0042803">
    <property type="term" value="F:protein homodimerization activity"/>
    <property type="evidence" value="ECO:0000250"/>
    <property type="project" value="UniProtKB"/>
</dbReference>
<dbReference type="GO" id="GO:0006974">
    <property type="term" value="P:DNA damage response"/>
    <property type="evidence" value="ECO:0000250"/>
    <property type="project" value="UniProtKB"/>
</dbReference>
<dbReference type="GO" id="GO:0006303">
    <property type="term" value="P:double-strand break repair via nonhomologous end joining"/>
    <property type="evidence" value="ECO:0000315"/>
    <property type="project" value="UniProtKB"/>
</dbReference>
<dbReference type="CDD" id="cd22286">
    <property type="entry name" value="HD_PAXX_N"/>
    <property type="match status" value="1"/>
</dbReference>
<dbReference type="InterPro" id="IPR027873">
    <property type="entry name" value="PAXX"/>
</dbReference>
<dbReference type="InterPro" id="IPR054134">
    <property type="entry name" value="PAXX_N"/>
</dbReference>
<dbReference type="PANTHER" id="PTHR28586">
    <property type="entry name" value="PROTEIN PAXX"/>
    <property type="match status" value="1"/>
</dbReference>
<dbReference type="PANTHER" id="PTHR28586:SF1">
    <property type="entry name" value="PROTEIN PAXX"/>
    <property type="match status" value="1"/>
</dbReference>
<dbReference type="Pfam" id="PF15384">
    <property type="entry name" value="PAXX"/>
    <property type="match status" value="1"/>
</dbReference>
<accession>Q8K0Y7</accession>
<accession>Q8C6V7</accession>
<name>PAXX_MOUSE</name>
<sequence length="205" mass="21977">MAPPLLSLPLCILPPGSGSPRLVCYCERDSGGDGDRDDFNLYVTDAAELWSTCFSPDSLARLKARFGLSGAEDIHSRFRAACQQQAVTVSLQEDRALITLSGDTPALAFDLSKVPSPEAAPRLQALTLSLAEHVCNLERRLAAAEETITSPKKNTQPAGTQFLPELDHQRGSSGPGVRRRCPGESLINPGFKSKKPAAGVDFDET</sequence>
<organism>
    <name type="scientific">Mus musculus</name>
    <name type="common">Mouse</name>
    <dbReference type="NCBI Taxonomy" id="10090"/>
    <lineage>
        <taxon>Eukaryota</taxon>
        <taxon>Metazoa</taxon>
        <taxon>Chordata</taxon>
        <taxon>Craniata</taxon>
        <taxon>Vertebrata</taxon>
        <taxon>Euteleostomi</taxon>
        <taxon>Mammalia</taxon>
        <taxon>Eutheria</taxon>
        <taxon>Euarchontoglires</taxon>
        <taxon>Glires</taxon>
        <taxon>Rodentia</taxon>
        <taxon>Myomorpha</taxon>
        <taxon>Muroidea</taxon>
        <taxon>Muridae</taxon>
        <taxon>Murinae</taxon>
        <taxon>Mus</taxon>
        <taxon>Mus</taxon>
    </lineage>
</organism>
<reference key="1">
    <citation type="journal article" date="2009" name="PLoS Biol.">
        <title>Lineage-specific biology revealed by a finished genome assembly of the mouse.</title>
        <authorList>
            <person name="Church D.M."/>
            <person name="Goodstadt L."/>
            <person name="Hillier L.W."/>
            <person name="Zody M.C."/>
            <person name="Goldstein S."/>
            <person name="She X."/>
            <person name="Bult C.J."/>
            <person name="Agarwala R."/>
            <person name="Cherry J.L."/>
            <person name="DiCuccio M."/>
            <person name="Hlavina W."/>
            <person name="Kapustin Y."/>
            <person name="Meric P."/>
            <person name="Maglott D."/>
            <person name="Birtle Z."/>
            <person name="Marques A.C."/>
            <person name="Graves T."/>
            <person name="Zhou S."/>
            <person name="Teague B."/>
            <person name="Potamousis K."/>
            <person name="Churas C."/>
            <person name="Place M."/>
            <person name="Herschleb J."/>
            <person name="Runnheim R."/>
            <person name="Forrest D."/>
            <person name="Amos-Landgraf J."/>
            <person name="Schwartz D.C."/>
            <person name="Cheng Z."/>
            <person name="Lindblad-Toh K."/>
            <person name="Eichler E.E."/>
            <person name="Ponting C.P."/>
        </authorList>
    </citation>
    <scope>NUCLEOTIDE SEQUENCE [LARGE SCALE GENOMIC DNA]</scope>
    <source>
        <strain>C57BL/6J</strain>
    </source>
</reference>
<reference key="2">
    <citation type="journal article" date="2004" name="Genome Res.">
        <title>The status, quality, and expansion of the NIH full-length cDNA project: the Mammalian Gene Collection (MGC).</title>
        <authorList>
            <consortium name="The MGC Project Team"/>
        </authorList>
    </citation>
    <scope>NUCLEOTIDE SEQUENCE [LARGE SCALE MRNA]</scope>
    <source>
        <strain>FVB/N</strain>
        <tissue>Liver</tissue>
    </source>
</reference>
<reference key="3">
    <citation type="journal article" date="2005" name="Science">
        <title>The transcriptional landscape of the mammalian genome.</title>
        <authorList>
            <person name="Carninci P."/>
            <person name="Kasukawa T."/>
            <person name="Katayama S."/>
            <person name="Gough J."/>
            <person name="Frith M.C."/>
            <person name="Maeda N."/>
            <person name="Oyama R."/>
            <person name="Ravasi T."/>
            <person name="Lenhard B."/>
            <person name="Wells C."/>
            <person name="Kodzius R."/>
            <person name="Shimokawa K."/>
            <person name="Bajic V.B."/>
            <person name="Brenner S.E."/>
            <person name="Batalov S."/>
            <person name="Forrest A.R."/>
            <person name="Zavolan M."/>
            <person name="Davis M.J."/>
            <person name="Wilming L.G."/>
            <person name="Aidinis V."/>
            <person name="Allen J.E."/>
            <person name="Ambesi-Impiombato A."/>
            <person name="Apweiler R."/>
            <person name="Aturaliya R.N."/>
            <person name="Bailey T.L."/>
            <person name="Bansal M."/>
            <person name="Baxter L."/>
            <person name="Beisel K.W."/>
            <person name="Bersano T."/>
            <person name="Bono H."/>
            <person name="Chalk A.M."/>
            <person name="Chiu K.P."/>
            <person name="Choudhary V."/>
            <person name="Christoffels A."/>
            <person name="Clutterbuck D.R."/>
            <person name="Crowe M.L."/>
            <person name="Dalla E."/>
            <person name="Dalrymple B.P."/>
            <person name="de Bono B."/>
            <person name="Della Gatta G."/>
            <person name="di Bernardo D."/>
            <person name="Down T."/>
            <person name="Engstrom P."/>
            <person name="Fagiolini M."/>
            <person name="Faulkner G."/>
            <person name="Fletcher C.F."/>
            <person name="Fukushima T."/>
            <person name="Furuno M."/>
            <person name="Futaki S."/>
            <person name="Gariboldi M."/>
            <person name="Georgii-Hemming P."/>
            <person name="Gingeras T.R."/>
            <person name="Gojobori T."/>
            <person name="Green R.E."/>
            <person name="Gustincich S."/>
            <person name="Harbers M."/>
            <person name="Hayashi Y."/>
            <person name="Hensch T.K."/>
            <person name="Hirokawa N."/>
            <person name="Hill D."/>
            <person name="Huminiecki L."/>
            <person name="Iacono M."/>
            <person name="Ikeo K."/>
            <person name="Iwama A."/>
            <person name="Ishikawa T."/>
            <person name="Jakt M."/>
            <person name="Kanapin A."/>
            <person name="Katoh M."/>
            <person name="Kawasawa Y."/>
            <person name="Kelso J."/>
            <person name="Kitamura H."/>
            <person name="Kitano H."/>
            <person name="Kollias G."/>
            <person name="Krishnan S.P."/>
            <person name="Kruger A."/>
            <person name="Kummerfeld S.K."/>
            <person name="Kurochkin I.V."/>
            <person name="Lareau L.F."/>
            <person name="Lazarevic D."/>
            <person name="Lipovich L."/>
            <person name="Liu J."/>
            <person name="Liuni S."/>
            <person name="McWilliam S."/>
            <person name="Madan Babu M."/>
            <person name="Madera M."/>
            <person name="Marchionni L."/>
            <person name="Matsuda H."/>
            <person name="Matsuzawa S."/>
            <person name="Miki H."/>
            <person name="Mignone F."/>
            <person name="Miyake S."/>
            <person name="Morris K."/>
            <person name="Mottagui-Tabar S."/>
            <person name="Mulder N."/>
            <person name="Nakano N."/>
            <person name="Nakauchi H."/>
            <person name="Ng P."/>
            <person name="Nilsson R."/>
            <person name="Nishiguchi S."/>
            <person name="Nishikawa S."/>
            <person name="Nori F."/>
            <person name="Ohara O."/>
            <person name="Okazaki Y."/>
            <person name="Orlando V."/>
            <person name="Pang K.C."/>
            <person name="Pavan W.J."/>
            <person name="Pavesi G."/>
            <person name="Pesole G."/>
            <person name="Petrovsky N."/>
            <person name="Piazza S."/>
            <person name="Reed J."/>
            <person name="Reid J.F."/>
            <person name="Ring B.Z."/>
            <person name="Ringwald M."/>
            <person name="Rost B."/>
            <person name="Ruan Y."/>
            <person name="Salzberg S.L."/>
            <person name="Sandelin A."/>
            <person name="Schneider C."/>
            <person name="Schoenbach C."/>
            <person name="Sekiguchi K."/>
            <person name="Semple C.A."/>
            <person name="Seno S."/>
            <person name="Sessa L."/>
            <person name="Sheng Y."/>
            <person name="Shibata Y."/>
            <person name="Shimada H."/>
            <person name="Shimada K."/>
            <person name="Silva D."/>
            <person name="Sinclair B."/>
            <person name="Sperling S."/>
            <person name="Stupka E."/>
            <person name="Sugiura K."/>
            <person name="Sultana R."/>
            <person name="Takenaka Y."/>
            <person name="Taki K."/>
            <person name="Tammoja K."/>
            <person name="Tan S.L."/>
            <person name="Tang S."/>
            <person name="Taylor M.S."/>
            <person name="Tegner J."/>
            <person name="Teichmann S.A."/>
            <person name="Ueda H.R."/>
            <person name="van Nimwegen E."/>
            <person name="Verardo R."/>
            <person name="Wei C.L."/>
            <person name="Yagi K."/>
            <person name="Yamanishi H."/>
            <person name="Zabarovsky E."/>
            <person name="Zhu S."/>
            <person name="Zimmer A."/>
            <person name="Hide W."/>
            <person name="Bult C."/>
            <person name="Grimmond S.M."/>
            <person name="Teasdale R.D."/>
            <person name="Liu E.T."/>
            <person name="Brusic V."/>
            <person name="Quackenbush J."/>
            <person name="Wahlestedt C."/>
            <person name="Mattick J.S."/>
            <person name="Hume D.A."/>
            <person name="Kai C."/>
            <person name="Sasaki D."/>
            <person name="Tomaru Y."/>
            <person name="Fukuda S."/>
            <person name="Kanamori-Katayama M."/>
            <person name="Suzuki M."/>
            <person name="Aoki J."/>
            <person name="Arakawa T."/>
            <person name="Iida J."/>
            <person name="Imamura K."/>
            <person name="Itoh M."/>
            <person name="Kato T."/>
            <person name="Kawaji H."/>
            <person name="Kawagashira N."/>
            <person name="Kawashima T."/>
            <person name="Kojima M."/>
            <person name="Kondo S."/>
            <person name="Konno H."/>
            <person name="Nakano K."/>
            <person name="Ninomiya N."/>
            <person name="Nishio T."/>
            <person name="Okada M."/>
            <person name="Plessy C."/>
            <person name="Shibata K."/>
            <person name="Shiraki T."/>
            <person name="Suzuki S."/>
            <person name="Tagami M."/>
            <person name="Waki K."/>
            <person name="Watahiki A."/>
            <person name="Okamura-Oho Y."/>
            <person name="Suzuki H."/>
            <person name="Kawai J."/>
            <person name="Hayashizaki Y."/>
        </authorList>
    </citation>
    <scope>NUCLEOTIDE SEQUENCE [LARGE SCALE MRNA] OF 70-205</scope>
    <source>
        <strain>C57BL/6J</strain>
        <tissue>Head</tissue>
    </source>
</reference>
<reference key="4">
    <citation type="journal article" date="2010" name="Cell">
        <title>A tissue-specific atlas of mouse protein phosphorylation and expression.</title>
        <authorList>
            <person name="Huttlin E.L."/>
            <person name="Jedrychowski M.P."/>
            <person name="Elias J.E."/>
            <person name="Goswami T."/>
            <person name="Rad R."/>
            <person name="Beausoleil S.A."/>
            <person name="Villen J."/>
            <person name="Haas W."/>
            <person name="Sowa M.E."/>
            <person name="Gygi S.P."/>
        </authorList>
    </citation>
    <scope>IDENTIFICATION BY MASS SPECTROMETRY [LARGE SCALE ANALYSIS]</scope>
    <source>
        <tissue>Brown adipose tissue</tissue>
    </source>
</reference>
<reference key="5">
    <citation type="journal article" date="2016" name="Cell Rep.">
        <title>Specific roles of XRCC4 paralogs PAXX and XLF during V(D)J recombination.</title>
        <authorList>
            <person name="Lescale C."/>
            <person name="Lenden Hasse H."/>
            <person name="Blackford A.N."/>
            <person name="Balmus G."/>
            <person name="Bianchi J.J."/>
            <person name="Yu W."/>
            <person name="Bacoccina L."/>
            <person name="Jarade A."/>
            <person name="Clouin C."/>
            <person name="Sivapalan R."/>
            <person name="Reina-San-Martin B."/>
            <person name="Jackson S.P."/>
            <person name="Deriano L."/>
        </authorList>
    </citation>
    <scope>FUNCTION</scope>
    <scope>DISRUPTION PHENOTYPE</scope>
</reference>
<reference key="6">
    <citation type="journal article" date="2016" name="Genes Dev.">
        <title>Synthetic lethality between PAXX and XLF in mammalian development.</title>
        <authorList>
            <person name="Balmus G."/>
            <person name="Barros A.C."/>
            <person name="Wijnhoven P.W."/>
            <person name="Lescale C."/>
            <person name="Hasse H.L."/>
            <person name="Boroviak K."/>
            <person name="le Sage C."/>
            <person name="Doe B."/>
            <person name="Speak A.O."/>
            <person name="Galli A."/>
            <person name="Jacobsen M."/>
            <person name="Deriano L."/>
            <person name="Adams D.J."/>
            <person name="Blackford A.N."/>
            <person name="Jackson S.P."/>
        </authorList>
    </citation>
    <scope>FUNCTION</scope>
    <scope>DISRUPTION PHENOTYPE</scope>
</reference>
<reference key="7">
    <citation type="journal article" date="2016" name="Proc. Natl. Acad. Sci. U.S.A.">
        <title>PAXX and XLF DNA repair factors are functionally redundant in joining DNA breaks in a G1-arrested progenitor B-cell line.</title>
        <authorList>
            <person name="Kumar V."/>
            <person name="Alt F.W."/>
            <person name="Frock R.L."/>
        </authorList>
    </citation>
    <scope>FUNCTION</scope>
    <scope>DISRUPTION PHENOTYPE</scope>
</reference>
<reference key="8">
    <citation type="journal article" date="2017" name="Cell Cycle">
        <title>Deficiency of XLF and PAXX prevents DNA double-strand break repair by non-homologous end joining in lymphocytes.</title>
        <authorList>
            <person name="Hung P.J."/>
            <person name="Chen B.R."/>
            <person name="George R."/>
            <person name="Liberman C."/>
            <person name="Morales A.J."/>
            <person name="Colon-Ortiz P."/>
            <person name="Tyler J.K."/>
            <person name="Sleckman B.P."/>
            <person name="Bredemeyer A.L."/>
        </authorList>
    </citation>
    <scope>FUNCTION</scope>
    <scope>DISRUPTION PHENOTYPE</scope>
</reference>
<reference key="9">
    <citation type="journal article" date="2017" name="Nat. Commun.">
        <title>PAXX promotes KU accumulation at DNA breaks and is essential for end-joining in XLF-deficient mice.</title>
        <authorList>
            <person name="Liu X."/>
            <person name="Shao Z."/>
            <person name="Jiang W."/>
            <person name="Lee B.J."/>
            <person name="Zha S."/>
        </authorList>
    </citation>
    <scope>FUNCTION</scope>
    <scope>DISRUPTION PHENOTYPE</scope>
</reference>
<reference key="10">
    <citation type="journal article" date="2018" name="Cell Death Differ.">
        <title>PAXX and Xlf interplay revealed by impaired CNS development and immunodeficiency of double KO mice.</title>
        <authorList>
            <person name="Abramowski V."/>
            <person name="Etienne O."/>
            <person name="Elsaid R."/>
            <person name="Yang J."/>
            <person name="Berland A."/>
            <person name="Kermasson L."/>
            <person name="Roch B."/>
            <person name="Musilli S."/>
            <person name="Moussu J.P."/>
            <person name="Lipson-Ruffert K."/>
            <person name="Revy P."/>
            <person name="Cumano A."/>
            <person name="Boussin F.D."/>
            <person name="de Villartay J.P."/>
        </authorList>
    </citation>
    <scope>FUNCTION</scope>
    <scope>DISRUPTION PHENOTYPE</scope>
</reference>
<reference key="11">
    <citation type="journal article" date="2018" name="FEBS Open Bio">
        <title>Normal development of mice lacking PAXX, the paralogue of XRCC4 and XLF.</title>
        <authorList>
            <person name="Gago-Fuentes R."/>
            <person name="Xing M."/>
            <person name="Saeterstad S."/>
            <person name="Sarno A."/>
            <person name="Dewan A."/>
            <person name="Beck C."/>
            <person name="Bradamante S."/>
            <person name="Bjoeraas M."/>
            <person name="Oksenych V."/>
        </authorList>
    </citation>
    <scope>DISRUPTION PHENOTYPE</scope>
</reference>
<reference key="12">
    <citation type="journal article" date="2018" name="FEBS Open Bio">
        <title>Robust DNA repair in PAXX-deficient mammalian cells.</title>
        <authorList>
            <person name="Dewan A."/>
            <person name="Xing M."/>
            <person name="Lundbaek M.B."/>
            <person name="Gago-Fuentes R."/>
            <person name="Beck C."/>
            <person name="Aas P.A."/>
            <person name="Liabakk N.B."/>
            <person name="Saeterstad S."/>
            <person name="Chau K.T.P."/>
            <person name="Kavli B.M."/>
            <person name="Oksenych V."/>
        </authorList>
    </citation>
    <scope>DISRUPTION PHENOTYPE</scope>
</reference>
<proteinExistence type="evidence at protein level"/>
<evidence type="ECO:0000250" key="1">
    <source>
        <dbReference type="UniProtKB" id="Q9BUH6"/>
    </source>
</evidence>
<evidence type="ECO:0000256" key="2">
    <source>
        <dbReference type="SAM" id="MobiDB-lite"/>
    </source>
</evidence>
<evidence type="ECO:0000269" key="3">
    <source>
    </source>
</evidence>
<evidence type="ECO:0000269" key="4">
    <source>
    </source>
</evidence>
<evidence type="ECO:0000269" key="5">
    <source>
    </source>
</evidence>
<evidence type="ECO:0000269" key="6">
    <source>
    </source>
</evidence>
<evidence type="ECO:0000269" key="7">
    <source>
    </source>
</evidence>
<evidence type="ECO:0000269" key="8">
    <source>
    </source>
</evidence>
<evidence type="ECO:0000269" key="9">
    <source>
    </source>
</evidence>
<evidence type="ECO:0000269" key="10">
    <source>
    </source>
</evidence>
<evidence type="ECO:0000303" key="11">
    <source>
    </source>
</evidence>
<evidence type="ECO:0000303" key="12">
    <source>
    </source>
</evidence>
<evidence type="ECO:0000305" key="13"/>
<comment type="function">
    <text evidence="1 3 4 5 6 7 8">Non-essential DNA repair protein involved in DNA non-homologous end joining (NHEJ); participates in double-strand break (DSB) repair and V(D)J recombination (PubMed:27601299, PubMed:27601633, PubMed:27798842, PubMed:27830975, PubMed:28051062, PubMed:29077092). May act as a scaffold required for accumulation of the Ku heterodimer, composed of XRCC5/Ku80 and XRCC6/Ku70, at double-strand break sites and promote the assembly and/or stability of the NHEJ machinery (PubMed:28051062). Involved in NHEJ by promoting the ligation of blunt-ended DNA ends (By similarity). Together with NHEJ1/XLF, collaborates with DNA polymerase lambda (POLL) to promote joining of non-cohesive DNA ends (By similarity). Constitutes a non-essential component of classical NHEJ: has a complementary but distinct function with NHEJ1/XLF in DNA repair (PubMed:27601299, PubMed:27798842, PubMed:27830975, PubMed:28051062).</text>
</comment>
<comment type="subunit">
    <text evidence="1">Homodimer (By similarity). Interacts with the DNA-bound XRCC5/Ku80 and XRCC6/Ku70 heterodimer (Ku complex); the interaction is direct (By similarity). Associated component of the non-homologous end joining (NHEJ) complex, composed of the core proteins PRKDC, LIG4, XRCC4, XRCC6/Ku70, XRCC5/Ku86 and NHEJ1/XLF (By similarity). Interacts with POLL (DNA polymerase lambda); promoting POLL recruitment to double-strand breaks (DSBs) and stimulation of the end-filling activity of POLL (By similarity).</text>
</comment>
<comment type="subcellular location">
    <subcellularLocation>
        <location evidence="1">Nucleus</location>
    </subcellularLocation>
    <subcellularLocation>
        <location evidence="1">Chromosome</location>
    </subcellularLocation>
    <text evidence="1">Predominantly localizes to the nucleus. Accumulates at sites of DNA damage generated by laser microirradiation.</text>
</comment>
<comment type="domain">
    <text evidence="1">The N-terminus (residues 1-115) forms a head domain that is structurally related to those of XRCC4, XLF/NHEJ1, and SASS6.</text>
</comment>
<comment type="PTM">
    <text evidence="1">Phosphorylation may inhibit interaction with the DNA-bound XRCC5/Ku80 and XRCC6/Ku70 heterodimer (Ku complex).</text>
</comment>
<comment type="disruption phenotype">
    <text evidence="3 4 5 6 7 8 9 10">No visible phenotype in normal conditions (PubMed:27798842, PubMed:28051062, PubMed:29511619, PubMed:29511621). Mice are viable, grow normally, are fertile and have normal lymphocyte development (PubMed:27798842, PubMed:29511619, PubMed:29511621). They however show mild radiosensitivity (PubMed:29511619, PubMed:29511621). Mice lacking both Paxx and Nhej1/Xlf show embryonic lethality caused by severe defects in classical non-homologous end joining (NHEJ) (PubMed:27601299, PubMed:27601633, PubMed:27798842, PubMed:27830975, PubMed:28051062, PubMed:29077092).</text>
</comment>
<comment type="similarity">
    <text evidence="13">Belongs to the XRCC4-XLF family. PAXX subfamily.</text>
</comment>
<keyword id="KW-0158">Chromosome</keyword>
<keyword id="KW-0227">DNA damage</keyword>
<keyword id="KW-0234">DNA repair</keyword>
<keyword id="KW-0539">Nucleus</keyword>
<keyword id="KW-0597">Phosphoprotein</keyword>
<keyword id="KW-1185">Reference proteome</keyword>
<protein>
    <recommendedName>
        <fullName evidence="13">Protein PAXX</fullName>
    </recommendedName>
    <alternativeName>
        <fullName evidence="11 12">Paralog of XRCC4 and XLF</fullName>
    </alternativeName>
</protein>
<gene>
    <name evidence="11 12" type="primary">Paxx</name>
</gene>